<proteinExistence type="inferred from homology"/>
<feature type="chain" id="PRO_0000320784" description="Protein translocase subunit SecA">
    <location>
        <begin position="1"/>
        <end position="840"/>
    </location>
</feature>
<feature type="region of interest" description="Disordered" evidence="2">
    <location>
        <begin position="787"/>
        <end position="821"/>
    </location>
</feature>
<feature type="compositionally biased region" description="Basic and acidic residues" evidence="2">
    <location>
        <begin position="802"/>
        <end position="819"/>
    </location>
</feature>
<feature type="binding site" evidence="1">
    <location>
        <position position="85"/>
    </location>
    <ligand>
        <name>ATP</name>
        <dbReference type="ChEBI" id="CHEBI:30616"/>
    </ligand>
</feature>
<feature type="binding site" evidence="1">
    <location>
        <begin position="103"/>
        <end position="107"/>
    </location>
    <ligand>
        <name>ATP</name>
        <dbReference type="ChEBI" id="CHEBI:30616"/>
    </ligand>
</feature>
<feature type="binding site" evidence="1">
    <location>
        <position position="492"/>
    </location>
    <ligand>
        <name>ATP</name>
        <dbReference type="ChEBI" id="CHEBI:30616"/>
    </ligand>
</feature>
<feature type="binding site" evidence="1">
    <location>
        <position position="823"/>
    </location>
    <ligand>
        <name>Zn(2+)</name>
        <dbReference type="ChEBI" id="CHEBI:29105"/>
    </ligand>
</feature>
<feature type="binding site" evidence="1">
    <location>
        <position position="825"/>
    </location>
    <ligand>
        <name>Zn(2+)</name>
        <dbReference type="ChEBI" id="CHEBI:29105"/>
    </ligand>
</feature>
<feature type="binding site" evidence="1">
    <location>
        <position position="834"/>
    </location>
    <ligand>
        <name>Zn(2+)</name>
        <dbReference type="ChEBI" id="CHEBI:29105"/>
    </ligand>
</feature>
<feature type="binding site" evidence="1">
    <location>
        <position position="835"/>
    </location>
    <ligand>
        <name>Zn(2+)</name>
        <dbReference type="ChEBI" id="CHEBI:29105"/>
    </ligand>
</feature>
<comment type="function">
    <text evidence="1">Part of the Sec protein translocase complex. Interacts with the SecYEG preprotein conducting channel. Has a central role in coupling the hydrolysis of ATP to the transfer of proteins into and across the cell membrane, serving as an ATP-driven molecular motor driving the stepwise translocation of polypeptide chains across the membrane.</text>
</comment>
<comment type="catalytic activity">
    <reaction evidence="1">
        <text>ATP + H2O + cellular proteinSide 1 = ADP + phosphate + cellular proteinSide 2.</text>
        <dbReference type="EC" id="7.4.2.8"/>
    </reaction>
</comment>
<comment type="cofactor">
    <cofactor evidence="1">
        <name>Zn(2+)</name>
        <dbReference type="ChEBI" id="CHEBI:29105"/>
    </cofactor>
    <text evidence="1">May bind 1 zinc ion per subunit.</text>
</comment>
<comment type="subunit">
    <text evidence="1">Monomer and homodimer. Part of the essential Sec protein translocation apparatus which comprises SecA, SecYEG and auxiliary proteins SecDF. Other proteins may also be involved.</text>
</comment>
<comment type="subcellular location">
    <subcellularLocation>
        <location evidence="1">Cell membrane</location>
        <topology evidence="1">Peripheral membrane protein</topology>
        <orientation evidence="1">Cytoplasmic side</orientation>
    </subcellularLocation>
    <subcellularLocation>
        <location evidence="1">Cytoplasm</location>
    </subcellularLocation>
    <text evidence="1">Distribution is 50-50.</text>
</comment>
<comment type="similarity">
    <text evidence="1">Belongs to the SecA family.</text>
</comment>
<comment type="sequence caution" evidence="3">
    <conflict type="erroneous initiation">
        <sequence resource="EMBL-CDS" id="ABG86973"/>
    </conflict>
    <text>Extended N-terminus.</text>
</comment>
<sequence>MGLFDKIFGSYSDREVKRITPIVDKIDSLGPEMEKLSDEELKQKTFEFKDRYAKGESLDDMLPEAFAVCREASTRVLGMKHYREQLIGGIVLHQGRIAEMKTGEGKTLVATLPVYLNAIAGKGVHVITVNDYLATRDKEWMGQLYEFLGLTTGVIVHGLTNDQRREAYNADITYGTNNEFGFDYLRDNMVIYKEERVQRPLHYCIVDEVDSILIDEARTPLIISGAGSKSTDLYKIADFFVKKLREEEDYTIDEKAHAAMLTDKGVAEAEKAFGIENYADANNMELQHHITQALKANYVMKRDKDYMVKDDEIAIVDEFTGRLMEGRRYSDGLHQAIEAKEGVKVQRESKTLATITFQNYFRMYTKLAGMTGTALTEETEFREIYGLDVVVIPTHRPVQRQDHSDLVFKTAKGKYDAIVEEIIETHKTGQPVLVGTTSIEKSEYLSSLLKKKGVPHKVLNARYHEQEAEIVSHAGELGNITIATNMAGRGTDIKLGEGVLEVGGLKIIGTERHESRRIDNQLRGRSGRQGDKGHSRFYISLEDDLMRIFGSEKLQAVVDRLGLEETEAIESKMVTKSIENAQKKVEGNNFDIRKTLLGYDDVMNKQREVIYKQRSQVLEGENLEDSVQAMIEDVITNAVQAHLGNIDEDDFEKELGDLIKYLEDIMLPHGKFTVEELKTNSNEEITRKFIECAREIYKEKEEFVGSEQMREIERVIILRVVDTKWMDHIDDMDHLKQGIGLRAYKQQDPIQAYQMEGSAMFDEMINNIKIDTVRYLFHVKVEAEKPQRERVAKETGASHGGDSQEIKKKPVKKEPKVGRNDLCPCGSGKKYKSCCGREVV</sequence>
<organism>
    <name type="scientific">Clostridium perfringens (strain SM101 / Type A)</name>
    <dbReference type="NCBI Taxonomy" id="289380"/>
    <lineage>
        <taxon>Bacteria</taxon>
        <taxon>Bacillati</taxon>
        <taxon>Bacillota</taxon>
        <taxon>Clostridia</taxon>
        <taxon>Eubacteriales</taxon>
        <taxon>Clostridiaceae</taxon>
        <taxon>Clostridium</taxon>
    </lineage>
</organism>
<name>SECA_CLOPS</name>
<protein>
    <recommendedName>
        <fullName evidence="1">Protein translocase subunit SecA</fullName>
        <ecNumber evidence="1">7.4.2.8</ecNumber>
    </recommendedName>
</protein>
<accession>Q0SR11</accession>
<evidence type="ECO:0000255" key="1">
    <source>
        <dbReference type="HAMAP-Rule" id="MF_01382"/>
    </source>
</evidence>
<evidence type="ECO:0000256" key="2">
    <source>
        <dbReference type="SAM" id="MobiDB-lite"/>
    </source>
</evidence>
<evidence type="ECO:0000305" key="3"/>
<gene>
    <name evidence="1" type="primary">secA</name>
    <name type="ordered locus">CPR_2139</name>
</gene>
<reference key="1">
    <citation type="journal article" date="2006" name="Genome Res.">
        <title>Skewed genomic variability in strains of the toxigenic bacterial pathogen, Clostridium perfringens.</title>
        <authorList>
            <person name="Myers G.S.A."/>
            <person name="Rasko D.A."/>
            <person name="Cheung J.K."/>
            <person name="Ravel J."/>
            <person name="Seshadri R."/>
            <person name="DeBoy R.T."/>
            <person name="Ren Q."/>
            <person name="Varga J."/>
            <person name="Awad M.M."/>
            <person name="Brinkac L.M."/>
            <person name="Daugherty S.C."/>
            <person name="Haft D.H."/>
            <person name="Dodson R.J."/>
            <person name="Madupu R."/>
            <person name="Nelson W.C."/>
            <person name="Rosovitz M.J."/>
            <person name="Sullivan S.A."/>
            <person name="Khouri H."/>
            <person name="Dimitrov G.I."/>
            <person name="Watkins K.L."/>
            <person name="Mulligan S."/>
            <person name="Benton J."/>
            <person name="Radune D."/>
            <person name="Fisher D.J."/>
            <person name="Atkins H.S."/>
            <person name="Hiscox T."/>
            <person name="Jost B.H."/>
            <person name="Billington S.J."/>
            <person name="Songer J.G."/>
            <person name="McClane B.A."/>
            <person name="Titball R.W."/>
            <person name="Rood J.I."/>
            <person name="Melville S.B."/>
            <person name="Paulsen I.T."/>
        </authorList>
    </citation>
    <scope>NUCLEOTIDE SEQUENCE [LARGE SCALE GENOMIC DNA]</scope>
    <source>
        <strain>SM101 / Type A</strain>
    </source>
</reference>
<keyword id="KW-0067">ATP-binding</keyword>
<keyword id="KW-1003">Cell membrane</keyword>
<keyword id="KW-0963">Cytoplasm</keyword>
<keyword id="KW-0472">Membrane</keyword>
<keyword id="KW-0479">Metal-binding</keyword>
<keyword id="KW-0547">Nucleotide-binding</keyword>
<keyword id="KW-0653">Protein transport</keyword>
<keyword id="KW-1278">Translocase</keyword>
<keyword id="KW-0811">Translocation</keyword>
<keyword id="KW-0813">Transport</keyword>
<keyword id="KW-0862">Zinc</keyword>
<dbReference type="EC" id="7.4.2.8" evidence="1"/>
<dbReference type="EMBL" id="CP000312">
    <property type="protein sequence ID" value="ABG86973.2"/>
    <property type="status" value="ALT_INIT"/>
    <property type="molecule type" value="Genomic_DNA"/>
</dbReference>
<dbReference type="RefSeq" id="WP_045009258.1">
    <property type="nucleotide sequence ID" value="NC_008262.1"/>
</dbReference>
<dbReference type="SMR" id="Q0SR11"/>
<dbReference type="KEGG" id="cpr:CPR_2139"/>
<dbReference type="Proteomes" id="UP000001824">
    <property type="component" value="Chromosome"/>
</dbReference>
<dbReference type="GO" id="GO:0031522">
    <property type="term" value="C:cell envelope Sec protein transport complex"/>
    <property type="evidence" value="ECO:0007669"/>
    <property type="project" value="TreeGrafter"/>
</dbReference>
<dbReference type="GO" id="GO:0005829">
    <property type="term" value="C:cytosol"/>
    <property type="evidence" value="ECO:0007669"/>
    <property type="project" value="TreeGrafter"/>
</dbReference>
<dbReference type="GO" id="GO:0005886">
    <property type="term" value="C:plasma membrane"/>
    <property type="evidence" value="ECO:0007669"/>
    <property type="project" value="UniProtKB-SubCell"/>
</dbReference>
<dbReference type="GO" id="GO:0005524">
    <property type="term" value="F:ATP binding"/>
    <property type="evidence" value="ECO:0007669"/>
    <property type="project" value="UniProtKB-UniRule"/>
</dbReference>
<dbReference type="GO" id="GO:0046872">
    <property type="term" value="F:metal ion binding"/>
    <property type="evidence" value="ECO:0007669"/>
    <property type="project" value="UniProtKB-KW"/>
</dbReference>
<dbReference type="GO" id="GO:0008564">
    <property type="term" value="F:protein-exporting ATPase activity"/>
    <property type="evidence" value="ECO:0007669"/>
    <property type="project" value="UniProtKB-EC"/>
</dbReference>
<dbReference type="GO" id="GO:0065002">
    <property type="term" value="P:intracellular protein transmembrane transport"/>
    <property type="evidence" value="ECO:0007669"/>
    <property type="project" value="UniProtKB-UniRule"/>
</dbReference>
<dbReference type="GO" id="GO:0017038">
    <property type="term" value="P:protein import"/>
    <property type="evidence" value="ECO:0007669"/>
    <property type="project" value="InterPro"/>
</dbReference>
<dbReference type="GO" id="GO:0006605">
    <property type="term" value="P:protein targeting"/>
    <property type="evidence" value="ECO:0007669"/>
    <property type="project" value="UniProtKB-UniRule"/>
</dbReference>
<dbReference type="GO" id="GO:0043952">
    <property type="term" value="P:protein transport by the Sec complex"/>
    <property type="evidence" value="ECO:0007669"/>
    <property type="project" value="TreeGrafter"/>
</dbReference>
<dbReference type="CDD" id="cd17928">
    <property type="entry name" value="DEXDc_SecA"/>
    <property type="match status" value="1"/>
</dbReference>
<dbReference type="CDD" id="cd18803">
    <property type="entry name" value="SF2_C_secA"/>
    <property type="match status" value="1"/>
</dbReference>
<dbReference type="FunFam" id="1.10.3060.10:FF:000002">
    <property type="entry name" value="Preprotein translocase subunit SecA"/>
    <property type="match status" value="1"/>
</dbReference>
<dbReference type="FunFam" id="3.40.50.300:FF:000694">
    <property type="entry name" value="Preprotein translocase subunit SecA"/>
    <property type="match status" value="1"/>
</dbReference>
<dbReference type="FunFam" id="3.90.1440.10:FF:000001">
    <property type="entry name" value="Preprotein translocase subunit SecA"/>
    <property type="match status" value="1"/>
</dbReference>
<dbReference type="FunFam" id="3.40.50.300:FF:000334">
    <property type="entry name" value="Protein translocase subunit SecA"/>
    <property type="match status" value="1"/>
</dbReference>
<dbReference type="Gene3D" id="1.10.3060.10">
    <property type="entry name" value="Helical scaffold and wing domains of SecA"/>
    <property type="match status" value="1"/>
</dbReference>
<dbReference type="Gene3D" id="3.40.50.300">
    <property type="entry name" value="P-loop containing nucleotide triphosphate hydrolases"/>
    <property type="match status" value="3"/>
</dbReference>
<dbReference type="Gene3D" id="3.90.1440.10">
    <property type="entry name" value="SecA, preprotein cross-linking domain"/>
    <property type="match status" value="1"/>
</dbReference>
<dbReference type="HAMAP" id="MF_01382">
    <property type="entry name" value="SecA"/>
    <property type="match status" value="1"/>
</dbReference>
<dbReference type="InterPro" id="IPR014001">
    <property type="entry name" value="Helicase_ATP-bd"/>
</dbReference>
<dbReference type="InterPro" id="IPR001650">
    <property type="entry name" value="Helicase_C-like"/>
</dbReference>
<dbReference type="InterPro" id="IPR027417">
    <property type="entry name" value="P-loop_NTPase"/>
</dbReference>
<dbReference type="InterPro" id="IPR004027">
    <property type="entry name" value="SEC_C_motif"/>
</dbReference>
<dbReference type="InterPro" id="IPR000185">
    <property type="entry name" value="SecA"/>
</dbReference>
<dbReference type="InterPro" id="IPR020937">
    <property type="entry name" value="SecA_CS"/>
</dbReference>
<dbReference type="InterPro" id="IPR011115">
    <property type="entry name" value="SecA_DEAD"/>
</dbReference>
<dbReference type="InterPro" id="IPR014018">
    <property type="entry name" value="SecA_motor_DEAD"/>
</dbReference>
<dbReference type="InterPro" id="IPR011130">
    <property type="entry name" value="SecA_preprotein_X-link_dom"/>
</dbReference>
<dbReference type="InterPro" id="IPR044722">
    <property type="entry name" value="SecA_SF2_C"/>
</dbReference>
<dbReference type="InterPro" id="IPR011116">
    <property type="entry name" value="SecA_Wing/Scaffold"/>
</dbReference>
<dbReference type="InterPro" id="IPR036266">
    <property type="entry name" value="SecA_Wing/Scaffold_sf"/>
</dbReference>
<dbReference type="InterPro" id="IPR036670">
    <property type="entry name" value="SecA_X-link_sf"/>
</dbReference>
<dbReference type="NCBIfam" id="NF006630">
    <property type="entry name" value="PRK09200.1"/>
    <property type="match status" value="1"/>
</dbReference>
<dbReference type="NCBIfam" id="NF009538">
    <property type="entry name" value="PRK12904.1"/>
    <property type="match status" value="1"/>
</dbReference>
<dbReference type="NCBIfam" id="TIGR00963">
    <property type="entry name" value="secA"/>
    <property type="match status" value="1"/>
</dbReference>
<dbReference type="PANTHER" id="PTHR30612:SF0">
    <property type="entry name" value="CHLOROPLAST PROTEIN-TRANSPORTING ATPASE"/>
    <property type="match status" value="1"/>
</dbReference>
<dbReference type="PANTHER" id="PTHR30612">
    <property type="entry name" value="SECA INNER MEMBRANE COMPONENT OF SEC PROTEIN SECRETION SYSTEM"/>
    <property type="match status" value="1"/>
</dbReference>
<dbReference type="Pfam" id="PF21090">
    <property type="entry name" value="P-loop_SecA"/>
    <property type="match status" value="1"/>
</dbReference>
<dbReference type="Pfam" id="PF02810">
    <property type="entry name" value="SEC-C"/>
    <property type="match status" value="1"/>
</dbReference>
<dbReference type="Pfam" id="PF07517">
    <property type="entry name" value="SecA_DEAD"/>
    <property type="match status" value="1"/>
</dbReference>
<dbReference type="Pfam" id="PF01043">
    <property type="entry name" value="SecA_PP_bind"/>
    <property type="match status" value="1"/>
</dbReference>
<dbReference type="Pfam" id="PF07516">
    <property type="entry name" value="SecA_SW"/>
    <property type="match status" value="1"/>
</dbReference>
<dbReference type="PRINTS" id="PR00906">
    <property type="entry name" value="SECA"/>
</dbReference>
<dbReference type="SMART" id="SM00957">
    <property type="entry name" value="SecA_DEAD"/>
    <property type="match status" value="1"/>
</dbReference>
<dbReference type="SMART" id="SM00958">
    <property type="entry name" value="SecA_PP_bind"/>
    <property type="match status" value="1"/>
</dbReference>
<dbReference type="SUPFAM" id="SSF81886">
    <property type="entry name" value="Helical scaffold and wing domains of SecA"/>
    <property type="match status" value="1"/>
</dbReference>
<dbReference type="SUPFAM" id="SSF52540">
    <property type="entry name" value="P-loop containing nucleoside triphosphate hydrolases"/>
    <property type="match status" value="2"/>
</dbReference>
<dbReference type="SUPFAM" id="SSF81767">
    <property type="entry name" value="Pre-protein crosslinking domain of SecA"/>
    <property type="match status" value="1"/>
</dbReference>
<dbReference type="PROSITE" id="PS01312">
    <property type="entry name" value="SECA"/>
    <property type="match status" value="1"/>
</dbReference>
<dbReference type="PROSITE" id="PS51196">
    <property type="entry name" value="SECA_MOTOR_DEAD"/>
    <property type="match status" value="1"/>
</dbReference>